<name>RL15_STREM</name>
<dbReference type="EMBL" id="CP001129">
    <property type="protein sequence ID" value="ACG61458.1"/>
    <property type="molecule type" value="Genomic_DNA"/>
</dbReference>
<dbReference type="RefSeq" id="WP_012514746.1">
    <property type="nucleotide sequence ID" value="NC_011134.1"/>
</dbReference>
<dbReference type="SMR" id="B4U519"/>
<dbReference type="GeneID" id="83703923"/>
<dbReference type="KEGG" id="sez:Sez_0075"/>
<dbReference type="HOGENOM" id="CLU_055188_4_2_9"/>
<dbReference type="Proteomes" id="UP000001873">
    <property type="component" value="Chromosome"/>
</dbReference>
<dbReference type="GO" id="GO:0022625">
    <property type="term" value="C:cytosolic large ribosomal subunit"/>
    <property type="evidence" value="ECO:0007669"/>
    <property type="project" value="TreeGrafter"/>
</dbReference>
<dbReference type="GO" id="GO:0019843">
    <property type="term" value="F:rRNA binding"/>
    <property type="evidence" value="ECO:0007669"/>
    <property type="project" value="UniProtKB-UniRule"/>
</dbReference>
<dbReference type="GO" id="GO:0003735">
    <property type="term" value="F:structural constituent of ribosome"/>
    <property type="evidence" value="ECO:0007669"/>
    <property type="project" value="InterPro"/>
</dbReference>
<dbReference type="GO" id="GO:0006412">
    <property type="term" value="P:translation"/>
    <property type="evidence" value="ECO:0007669"/>
    <property type="project" value="UniProtKB-UniRule"/>
</dbReference>
<dbReference type="FunFam" id="3.100.10.10:FF:000004">
    <property type="entry name" value="50S ribosomal protein L15"/>
    <property type="match status" value="1"/>
</dbReference>
<dbReference type="Gene3D" id="3.100.10.10">
    <property type="match status" value="1"/>
</dbReference>
<dbReference type="HAMAP" id="MF_01341">
    <property type="entry name" value="Ribosomal_uL15"/>
    <property type="match status" value="1"/>
</dbReference>
<dbReference type="InterPro" id="IPR030878">
    <property type="entry name" value="Ribosomal_uL15"/>
</dbReference>
<dbReference type="InterPro" id="IPR021131">
    <property type="entry name" value="Ribosomal_uL15/eL18"/>
</dbReference>
<dbReference type="InterPro" id="IPR036227">
    <property type="entry name" value="Ribosomal_uL15/eL18_sf"/>
</dbReference>
<dbReference type="InterPro" id="IPR005749">
    <property type="entry name" value="Ribosomal_uL15_bac-type"/>
</dbReference>
<dbReference type="InterPro" id="IPR001196">
    <property type="entry name" value="Ribosomal_uL15_CS"/>
</dbReference>
<dbReference type="NCBIfam" id="TIGR01071">
    <property type="entry name" value="rplO_bact"/>
    <property type="match status" value="1"/>
</dbReference>
<dbReference type="PANTHER" id="PTHR12934">
    <property type="entry name" value="50S RIBOSOMAL PROTEIN L15"/>
    <property type="match status" value="1"/>
</dbReference>
<dbReference type="PANTHER" id="PTHR12934:SF11">
    <property type="entry name" value="LARGE RIBOSOMAL SUBUNIT PROTEIN UL15M"/>
    <property type="match status" value="1"/>
</dbReference>
<dbReference type="Pfam" id="PF00828">
    <property type="entry name" value="Ribosomal_L27A"/>
    <property type="match status" value="1"/>
</dbReference>
<dbReference type="SUPFAM" id="SSF52080">
    <property type="entry name" value="Ribosomal proteins L15p and L18e"/>
    <property type="match status" value="1"/>
</dbReference>
<dbReference type="PROSITE" id="PS00475">
    <property type="entry name" value="RIBOSOMAL_L15"/>
    <property type="match status" value="1"/>
</dbReference>
<protein>
    <recommendedName>
        <fullName evidence="1">Large ribosomal subunit protein uL15</fullName>
    </recommendedName>
    <alternativeName>
        <fullName evidence="3">50S ribosomal protein L15</fullName>
    </alternativeName>
</protein>
<sequence length="146" mass="15462">MKLHELKPAKGSRKVRNRVGRGTSSGNGKTSGRGQKGQKARSGGGVRLGFEGGQTPLFRRIPKRGFTNINTKEYALVNLDQLNAFEDGTEVTPVVLKEAGIVRAEKSGVKILGNGELTKKLTVKAAKFSKSAEAAITAKGGSIEVI</sequence>
<accession>B4U519</accession>
<reference key="1">
    <citation type="journal article" date="2008" name="PLoS ONE">
        <title>Genome sequence of a lancefield group C Streptococcus zooepidemicus strain causing epidemic nephritis: new information about an old disease.</title>
        <authorList>
            <person name="Beres S.B."/>
            <person name="Sesso R."/>
            <person name="Pinto S.W.L."/>
            <person name="Hoe N.P."/>
            <person name="Porcella S.F."/>
            <person name="Deleo F.R."/>
            <person name="Musser J.M."/>
        </authorList>
    </citation>
    <scope>NUCLEOTIDE SEQUENCE [LARGE SCALE GENOMIC DNA]</scope>
    <source>
        <strain>MGCS10565</strain>
    </source>
</reference>
<organism>
    <name type="scientific">Streptococcus equi subsp. zooepidemicus (strain MGCS10565)</name>
    <dbReference type="NCBI Taxonomy" id="552526"/>
    <lineage>
        <taxon>Bacteria</taxon>
        <taxon>Bacillati</taxon>
        <taxon>Bacillota</taxon>
        <taxon>Bacilli</taxon>
        <taxon>Lactobacillales</taxon>
        <taxon>Streptococcaceae</taxon>
        <taxon>Streptococcus</taxon>
    </lineage>
</organism>
<keyword id="KW-0687">Ribonucleoprotein</keyword>
<keyword id="KW-0689">Ribosomal protein</keyword>
<keyword id="KW-0694">RNA-binding</keyword>
<keyword id="KW-0699">rRNA-binding</keyword>
<proteinExistence type="inferred from homology"/>
<evidence type="ECO:0000255" key="1">
    <source>
        <dbReference type="HAMAP-Rule" id="MF_01341"/>
    </source>
</evidence>
<evidence type="ECO:0000256" key="2">
    <source>
        <dbReference type="SAM" id="MobiDB-lite"/>
    </source>
</evidence>
<evidence type="ECO:0000305" key="3"/>
<gene>
    <name evidence="1" type="primary">rplO</name>
    <name type="ordered locus">Sez_0075</name>
</gene>
<comment type="function">
    <text evidence="1">Binds to the 23S rRNA.</text>
</comment>
<comment type="subunit">
    <text evidence="1">Part of the 50S ribosomal subunit.</text>
</comment>
<comment type="similarity">
    <text evidence="1">Belongs to the universal ribosomal protein uL15 family.</text>
</comment>
<feature type="chain" id="PRO_1000142883" description="Large ribosomal subunit protein uL15">
    <location>
        <begin position="1"/>
        <end position="146"/>
    </location>
</feature>
<feature type="region of interest" description="Disordered" evidence="2">
    <location>
        <begin position="1"/>
        <end position="51"/>
    </location>
</feature>
<feature type="compositionally biased region" description="Basic residues" evidence="2">
    <location>
        <begin position="10"/>
        <end position="19"/>
    </location>
</feature>
<feature type="compositionally biased region" description="Gly residues" evidence="2">
    <location>
        <begin position="23"/>
        <end position="35"/>
    </location>
</feature>
<feature type="compositionally biased region" description="Gly residues" evidence="2">
    <location>
        <begin position="42"/>
        <end position="51"/>
    </location>
</feature>